<accession>Q2FI15</accession>
<sequence length="286" mass="30844">MVAKILDGKQIAKDYRQGLQDQVEALKEKGFTPKLSVILVGNDGASQSYVRSKKKAAEKIGMISEIVHLEETATEEEVLNELNRLNNDDSVSGILVQVPLPKQVSEQKILEAINPEKDVDGFHPINIGKLYIDEQTFVPCTPLGIMEILKHADIDLEGKNAVVIGRSHIVGQPVSKLLLQKNASVTILHSRSKDMASYLKDADVIVSAVGKPGLVTKDVVKEGAVIIDVGNTPDENGKLKGDVDYDAVKEIAGAITPVPGGVGPLTITMVLNNTLLAEKMRRGIDS</sequence>
<name>FOLD_STAA3</name>
<reference key="1">
    <citation type="journal article" date="2006" name="Lancet">
        <title>Complete genome sequence of USA300, an epidemic clone of community-acquired meticillin-resistant Staphylococcus aureus.</title>
        <authorList>
            <person name="Diep B.A."/>
            <person name="Gill S.R."/>
            <person name="Chang R.F."/>
            <person name="Phan T.H."/>
            <person name="Chen J.H."/>
            <person name="Davidson M.G."/>
            <person name="Lin F."/>
            <person name="Lin J."/>
            <person name="Carleton H.A."/>
            <person name="Mongodin E.F."/>
            <person name="Sensabaugh G.F."/>
            <person name="Perdreau-Remington F."/>
        </authorList>
    </citation>
    <scope>NUCLEOTIDE SEQUENCE [LARGE SCALE GENOMIC DNA]</scope>
    <source>
        <strain>USA300</strain>
    </source>
</reference>
<dbReference type="EC" id="1.5.1.5" evidence="1"/>
<dbReference type="EC" id="3.5.4.9" evidence="1"/>
<dbReference type="EMBL" id="CP000255">
    <property type="protein sequence ID" value="ABD22057.1"/>
    <property type="molecule type" value="Genomic_DNA"/>
</dbReference>
<dbReference type="RefSeq" id="WP_000225837.1">
    <property type="nucleotide sequence ID" value="NZ_CP027476.1"/>
</dbReference>
<dbReference type="SMR" id="Q2FI15"/>
<dbReference type="KEGG" id="saa:SAUSA300_0965"/>
<dbReference type="HOGENOM" id="CLU_034045_2_1_9"/>
<dbReference type="OMA" id="VCHILTK"/>
<dbReference type="UniPathway" id="UPA00193"/>
<dbReference type="Proteomes" id="UP000001939">
    <property type="component" value="Chromosome"/>
</dbReference>
<dbReference type="GO" id="GO:0005829">
    <property type="term" value="C:cytosol"/>
    <property type="evidence" value="ECO:0007669"/>
    <property type="project" value="TreeGrafter"/>
</dbReference>
<dbReference type="GO" id="GO:0004477">
    <property type="term" value="F:methenyltetrahydrofolate cyclohydrolase activity"/>
    <property type="evidence" value="ECO:0007669"/>
    <property type="project" value="UniProtKB-UniRule"/>
</dbReference>
<dbReference type="GO" id="GO:0004488">
    <property type="term" value="F:methylenetetrahydrofolate dehydrogenase (NADP+) activity"/>
    <property type="evidence" value="ECO:0007669"/>
    <property type="project" value="UniProtKB-UniRule"/>
</dbReference>
<dbReference type="GO" id="GO:0000105">
    <property type="term" value="P:L-histidine biosynthetic process"/>
    <property type="evidence" value="ECO:0007669"/>
    <property type="project" value="UniProtKB-KW"/>
</dbReference>
<dbReference type="GO" id="GO:0009086">
    <property type="term" value="P:methionine biosynthetic process"/>
    <property type="evidence" value="ECO:0007669"/>
    <property type="project" value="UniProtKB-KW"/>
</dbReference>
<dbReference type="GO" id="GO:0006164">
    <property type="term" value="P:purine nucleotide biosynthetic process"/>
    <property type="evidence" value="ECO:0007669"/>
    <property type="project" value="UniProtKB-KW"/>
</dbReference>
<dbReference type="GO" id="GO:0035999">
    <property type="term" value="P:tetrahydrofolate interconversion"/>
    <property type="evidence" value="ECO:0007669"/>
    <property type="project" value="UniProtKB-UniRule"/>
</dbReference>
<dbReference type="CDD" id="cd01080">
    <property type="entry name" value="NAD_bind_m-THF_DH_Cyclohyd"/>
    <property type="match status" value="1"/>
</dbReference>
<dbReference type="FunFam" id="3.40.50.10860:FF:000001">
    <property type="entry name" value="Bifunctional protein FolD"/>
    <property type="match status" value="1"/>
</dbReference>
<dbReference type="FunFam" id="3.40.50.720:FF:000094">
    <property type="entry name" value="Bifunctional protein FolD"/>
    <property type="match status" value="1"/>
</dbReference>
<dbReference type="Gene3D" id="3.40.50.10860">
    <property type="entry name" value="Leucine Dehydrogenase, chain A, domain 1"/>
    <property type="match status" value="1"/>
</dbReference>
<dbReference type="Gene3D" id="3.40.50.720">
    <property type="entry name" value="NAD(P)-binding Rossmann-like Domain"/>
    <property type="match status" value="1"/>
</dbReference>
<dbReference type="HAMAP" id="MF_01576">
    <property type="entry name" value="THF_DHG_CYH"/>
    <property type="match status" value="1"/>
</dbReference>
<dbReference type="InterPro" id="IPR046346">
    <property type="entry name" value="Aminoacid_DH-like_N_sf"/>
</dbReference>
<dbReference type="InterPro" id="IPR036291">
    <property type="entry name" value="NAD(P)-bd_dom_sf"/>
</dbReference>
<dbReference type="InterPro" id="IPR000672">
    <property type="entry name" value="THF_DH/CycHdrlase"/>
</dbReference>
<dbReference type="InterPro" id="IPR020630">
    <property type="entry name" value="THF_DH/CycHdrlase_cat_dom"/>
</dbReference>
<dbReference type="InterPro" id="IPR020631">
    <property type="entry name" value="THF_DH/CycHdrlase_NAD-bd_dom"/>
</dbReference>
<dbReference type="NCBIfam" id="NF010772">
    <property type="entry name" value="PRK14175.1"/>
    <property type="match status" value="1"/>
</dbReference>
<dbReference type="PANTHER" id="PTHR48099:SF5">
    <property type="entry name" value="C-1-TETRAHYDROFOLATE SYNTHASE, CYTOPLASMIC"/>
    <property type="match status" value="1"/>
</dbReference>
<dbReference type="PANTHER" id="PTHR48099">
    <property type="entry name" value="C-1-TETRAHYDROFOLATE SYNTHASE, CYTOPLASMIC-RELATED"/>
    <property type="match status" value="1"/>
</dbReference>
<dbReference type="Pfam" id="PF00763">
    <property type="entry name" value="THF_DHG_CYH"/>
    <property type="match status" value="1"/>
</dbReference>
<dbReference type="Pfam" id="PF02882">
    <property type="entry name" value="THF_DHG_CYH_C"/>
    <property type="match status" value="1"/>
</dbReference>
<dbReference type="PRINTS" id="PR00085">
    <property type="entry name" value="THFDHDRGNASE"/>
</dbReference>
<dbReference type="SUPFAM" id="SSF53223">
    <property type="entry name" value="Aminoacid dehydrogenase-like, N-terminal domain"/>
    <property type="match status" value="1"/>
</dbReference>
<dbReference type="SUPFAM" id="SSF51735">
    <property type="entry name" value="NAD(P)-binding Rossmann-fold domains"/>
    <property type="match status" value="1"/>
</dbReference>
<proteinExistence type="inferred from homology"/>
<evidence type="ECO:0000255" key="1">
    <source>
        <dbReference type="HAMAP-Rule" id="MF_01576"/>
    </source>
</evidence>
<keyword id="KW-0028">Amino-acid biosynthesis</keyword>
<keyword id="KW-0368">Histidine biosynthesis</keyword>
<keyword id="KW-0378">Hydrolase</keyword>
<keyword id="KW-0486">Methionine biosynthesis</keyword>
<keyword id="KW-0511">Multifunctional enzyme</keyword>
<keyword id="KW-0521">NADP</keyword>
<keyword id="KW-0554">One-carbon metabolism</keyword>
<keyword id="KW-0560">Oxidoreductase</keyword>
<keyword id="KW-0658">Purine biosynthesis</keyword>
<protein>
    <recommendedName>
        <fullName evidence="1">Bifunctional protein FolD</fullName>
    </recommendedName>
    <domain>
        <recommendedName>
            <fullName evidence="1">Methylenetetrahydrofolate dehydrogenase</fullName>
            <ecNumber evidence="1">1.5.1.5</ecNumber>
        </recommendedName>
    </domain>
    <domain>
        <recommendedName>
            <fullName evidence="1">Methenyltetrahydrofolate cyclohydrolase</fullName>
            <ecNumber evidence="1">3.5.4.9</ecNumber>
        </recommendedName>
    </domain>
</protein>
<comment type="function">
    <text evidence="1">Catalyzes the oxidation of 5,10-methylenetetrahydrofolate to 5,10-methenyltetrahydrofolate and then the hydrolysis of 5,10-methenyltetrahydrofolate to 10-formyltetrahydrofolate.</text>
</comment>
<comment type="catalytic activity">
    <reaction evidence="1">
        <text>(6R)-5,10-methylene-5,6,7,8-tetrahydrofolate + NADP(+) = (6R)-5,10-methenyltetrahydrofolate + NADPH</text>
        <dbReference type="Rhea" id="RHEA:22812"/>
        <dbReference type="ChEBI" id="CHEBI:15636"/>
        <dbReference type="ChEBI" id="CHEBI:57455"/>
        <dbReference type="ChEBI" id="CHEBI:57783"/>
        <dbReference type="ChEBI" id="CHEBI:58349"/>
        <dbReference type="EC" id="1.5.1.5"/>
    </reaction>
</comment>
<comment type="catalytic activity">
    <reaction evidence="1">
        <text>(6R)-5,10-methenyltetrahydrofolate + H2O = (6R)-10-formyltetrahydrofolate + H(+)</text>
        <dbReference type="Rhea" id="RHEA:23700"/>
        <dbReference type="ChEBI" id="CHEBI:15377"/>
        <dbReference type="ChEBI" id="CHEBI:15378"/>
        <dbReference type="ChEBI" id="CHEBI:57455"/>
        <dbReference type="ChEBI" id="CHEBI:195366"/>
        <dbReference type="EC" id="3.5.4.9"/>
    </reaction>
</comment>
<comment type="pathway">
    <text evidence="1">One-carbon metabolism; tetrahydrofolate interconversion.</text>
</comment>
<comment type="subunit">
    <text evidence="1">Homodimer.</text>
</comment>
<comment type="similarity">
    <text evidence="1">Belongs to the tetrahydrofolate dehydrogenase/cyclohydrolase family.</text>
</comment>
<organism>
    <name type="scientific">Staphylococcus aureus (strain USA300)</name>
    <dbReference type="NCBI Taxonomy" id="367830"/>
    <lineage>
        <taxon>Bacteria</taxon>
        <taxon>Bacillati</taxon>
        <taxon>Bacillota</taxon>
        <taxon>Bacilli</taxon>
        <taxon>Bacillales</taxon>
        <taxon>Staphylococcaceae</taxon>
        <taxon>Staphylococcus</taxon>
    </lineage>
</organism>
<gene>
    <name evidence="1" type="primary">folD</name>
    <name type="ordered locus">SAUSA300_0965</name>
</gene>
<feature type="chain" id="PRO_0000265942" description="Bifunctional protein FolD">
    <location>
        <begin position="1"/>
        <end position="286"/>
    </location>
</feature>
<feature type="binding site" evidence="1">
    <location>
        <begin position="165"/>
        <end position="167"/>
    </location>
    <ligand>
        <name>NADP(+)</name>
        <dbReference type="ChEBI" id="CHEBI:58349"/>
    </ligand>
</feature>
<feature type="binding site" evidence="1">
    <location>
        <position position="190"/>
    </location>
    <ligand>
        <name>NADP(+)</name>
        <dbReference type="ChEBI" id="CHEBI:58349"/>
    </ligand>
</feature>